<protein>
    <recommendedName>
        <fullName>R-linalool synthase, chloroplastic</fullName>
        <ecNumber evidence="5">4.2.3.26</ecNumber>
    </recommendedName>
</protein>
<name>LLOS_OCIBA</name>
<dbReference type="EC" id="4.2.3.26" evidence="5"/>
<dbReference type="EMBL" id="AY693647">
    <property type="protein sequence ID" value="AAV63789.1"/>
    <property type="molecule type" value="mRNA"/>
</dbReference>
<dbReference type="SMR" id="Q5SBP3"/>
<dbReference type="UniPathway" id="UPA00213"/>
<dbReference type="GO" id="GO:0009507">
    <property type="term" value="C:chloroplast"/>
    <property type="evidence" value="ECO:0007669"/>
    <property type="project" value="UniProtKB-SubCell"/>
</dbReference>
<dbReference type="GO" id="GO:0000287">
    <property type="term" value="F:magnesium ion binding"/>
    <property type="evidence" value="ECO:0007669"/>
    <property type="project" value="InterPro"/>
</dbReference>
<dbReference type="GO" id="GO:0034008">
    <property type="term" value="F:R-linalool synthase activity"/>
    <property type="evidence" value="ECO:0007669"/>
    <property type="project" value="UniProtKB-EC"/>
</dbReference>
<dbReference type="GO" id="GO:0010333">
    <property type="term" value="F:terpene synthase activity"/>
    <property type="evidence" value="ECO:0007669"/>
    <property type="project" value="InterPro"/>
</dbReference>
<dbReference type="GO" id="GO:0016102">
    <property type="term" value="P:diterpenoid biosynthetic process"/>
    <property type="evidence" value="ECO:0007669"/>
    <property type="project" value="InterPro"/>
</dbReference>
<dbReference type="CDD" id="cd00684">
    <property type="entry name" value="Terpene_cyclase_plant_C1"/>
    <property type="match status" value="1"/>
</dbReference>
<dbReference type="FunFam" id="1.10.600.10:FF:000007">
    <property type="entry name" value="Isoprene synthase, chloroplastic"/>
    <property type="match status" value="1"/>
</dbReference>
<dbReference type="Gene3D" id="1.10.600.10">
    <property type="entry name" value="Farnesyl Diphosphate Synthase"/>
    <property type="match status" value="1"/>
</dbReference>
<dbReference type="Gene3D" id="1.50.10.130">
    <property type="entry name" value="Terpene synthase, N-terminal domain"/>
    <property type="match status" value="1"/>
</dbReference>
<dbReference type="InterPro" id="IPR008949">
    <property type="entry name" value="Isoprenoid_synthase_dom_sf"/>
</dbReference>
<dbReference type="InterPro" id="IPR034741">
    <property type="entry name" value="Terpene_cyclase-like_1_C"/>
</dbReference>
<dbReference type="InterPro" id="IPR044814">
    <property type="entry name" value="Terpene_cyclase_plant_C1"/>
</dbReference>
<dbReference type="InterPro" id="IPR001906">
    <property type="entry name" value="Terpene_synth_N"/>
</dbReference>
<dbReference type="InterPro" id="IPR036965">
    <property type="entry name" value="Terpene_synth_N_sf"/>
</dbReference>
<dbReference type="InterPro" id="IPR050148">
    <property type="entry name" value="Terpene_synthase-like"/>
</dbReference>
<dbReference type="InterPro" id="IPR005630">
    <property type="entry name" value="Terpene_synthase_metal-bd"/>
</dbReference>
<dbReference type="InterPro" id="IPR008930">
    <property type="entry name" value="Terpenoid_cyclase/PrenylTrfase"/>
</dbReference>
<dbReference type="PANTHER" id="PTHR31225">
    <property type="entry name" value="OS04G0344100 PROTEIN-RELATED"/>
    <property type="match status" value="1"/>
</dbReference>
<dbReference type="PANTHER" id="PTHR31225:SF137">
    <property type="entry name" value="TERPENE SYNTHASE 11-RELATED"/>
    <property type="match status" value="1"/>
</dbReference>
<dbReference type="Pfam" id="PF01397">
    <property type="entry name" value="Terpene_synth"/>
    <property type="match status" value="1"/>
</dbReference>
<dbReference type="Pfam" id="PF03936">
    <property type="entry name" value="Terpene_synth_C"/>
    <property type="match status" value="1"/>
</dbReference>
<dbReference type="SFLD" id="SFLDS00005">
    <property type="entry name" value="Isoprenoid_Synthase_Type_I"/>
    <property type="match status" value="1"/>
</dbReference>
<dbReference type="SFLD" id="SFLDG01019">
    <property type="entry name" value="Terpene_Cyclase_Like_1_C_Termi"/>
    <property type="match status" value="1"/>
</dbReference>
<dbReference type="SUPFAM" id="SSF48239">
    <property type="entry name" value="Terpenoid cyclases/Protein prenyltransferases"/>
    <property type="match status" value="1"/>
</dbReference>
<dbReference type="SUPFAM" id="SSF48576">
    <property type="entry name" value="Terpenoid synthases"/>
    <property type="match status" value="1"/>
</dbReference>
<accession>Q5SBP3</accession>
<reference key="1">
    <citation type="journal article" date="2004" name="Plant Physiol.">
        <title>The biochemical and molecular basis for the divergent patterns in the biosynthesis of terpenes and phenylpropenes in the peltate glands of three cultivars of basil.</title>
        <authorList>
            <person name="Iijima Y."/>
            <person name="Davidovich-Rikanati R."/>
            <person name="Fridman E."/>
            <person name="Gang D.R."/>
            <person name="Bar E."/>
            <person name="Lewinsohn E."/>
            <person name="Pichersky E."/>
        </authorList>
    </citation>
    <scope>NUCLEOTIDE SEQUENCE [MRNA]</scope>
    <scope>CATALYTIC ACTIVITY</scope>
    <scope>SUBCELLULAR LOCATION</scope>
    <source>
        <tissue>Peltate glandular trichome</tissue>
    </source>
</reference>
<feature type="transit peptide" description="Chloroplast" evidence="3">
    <location>
        <begin position="1"/>
        <end position="40"/>
    </location>
</feature>
<feature type="chain" id="PRO_0000398174" description="R-linalool synthase, chloroplastic">
    <location>
        <begin position="41"/>
        <end position="574"/>
    </location>
</feature>
<feature type="region of interest" description="Disordered" evidence="4">
    <location>
        <begin position="52"/>
        <end position="71"/>
    </location>
</feature>
<feature type="short sequence motif" description="DDXXD motif" evidence="2">
    <location>
        <begin position="324"/>
        <end position="328"/>
    </location>
</feature>
<feature type="compositionally biased region" description="Polar residues" evidence="4">
    <location>
        <begin position="52"/>
        <end position="61"/>
    </location>
</feature>
<feature type="binding site" evidence="2">
    <location>
        <position position="287"/>
    </location>
    <ligand>
        <name>(2E)-geranyl diphosphate</name>
        <dbReference type="ChEBI" id="CHEBI:58057"/>
    </ligand>
</feature>
<feature type="binding site" evidence="2">
    <location>
        <position position="324"/>
    </location>
    <ligand>
        <name>(2E)-geranyl diphosphate</name>
        <dbReference type="ChEBI" id="CHEBI:58057"/>
    </ligand>
</feature>
<feature type="binding site" evidence="2">
    <location>
        <position position="324"/>
    </location>
    <ligand>
        <name>Mg(2+)</name>
        <dbReference type="ChEBI" id="CHEBI:18420"/>
        <label>1</label>
    </ligand>
</feature>
<feature type="binding site" evidence="2">
    <location>
        <position position="324"/>
    </location>
    <ligand>
        <name>Mg(2+)</name>
        <dbReference type="ChEBI" id="CHEBI:18420"/>
        <label>2</label>
    </ligand>
</feature>
<feature type="binding site" evidence="2">
    <location>
        <position position="328"/>
    </location>
    <ligand>
        <name>(2E)-geranyl diphosphate</name>
        <dbReference type="ChEBI" id="CHEBI:58057"/>
    </ligand>
</feature>
<feature type="binding site" evidence="2">
    <location>
        <position position="328"/>
    </location>
    <ligand>
        <name>Mg(2+)</name>
        <dbReference type="ChEBI" id="CHEBI:18420"/>
        <label>1</label>
    </ligand>
</feature>
<feature type="binding site" evidence="2">
    <location>
        <position position="328"/>
    </location>
    <ligand>
        <name>Mg(2+)</name>
        <dbReference type="ChEBI" id="CHEBI:18420"/>
        <label>2</label>
    </ligand>
</feature>
<feature type="binding site" evidence="2">
    <location>
        <position position="467"/>
    </location>
    <ligand>
        <name>(2E)-geranyl diphosphate</name>
        <dbReference type="ChEBI" id="CHEBI:58057"/>
    </ligand>
</feature>
<feature type="binding site" evidence="2">
    <location>
        <position position="470"/>
    </location>
    <ligand>
        <name>(2E)-geranyl diphosphate</name>
        <dbReference type="ChEBI" id="CHEBI:58057"/>
    </ligand>
</feature>
<feature type="binding site" evidence="2">
    <location>
        <position position="470"/>
    </location>
    <ligand>
        <name>Mg(2+)</name>
        <dbReference type="ChEBI" id="CHEBI:18420"/>
        <label>3</label>
    </ligand>
</feature>
<feature type="binding site" evidence="2">
    <location>
        <position position="474"/>
    </location>
    <ligand>
        <name>Mg(2+)</name>
        <dbReference type="ChEBI" id="CHEBI:18420"/>
        <label>3</label>
    </ligand>
</feature>
<feature type="binding site" evidence="2">
    <location>
        <position position="478"/>
    </location>
    <ligand>
        <name>Mg(2+)</name>
        <dbReference type="ChEBI" id="CHEBI:18420"/>
        <label>3</label>
    </ligand>
</feature>
<evidence type="ECO:0000250" key="1">
    <source>
        <dbReference type="UniProtKB" id="A0A1C9J6A7"/>
    </source>
</evidence>
<evidence type="ECO:0000250" key="2">
    <source>
        <dbReference type="UniProtKB" id="Q40577"/>
    </source>
</evidence>
<evidence type="ECO:0000255" key="3"/>
<evidence type="ECO:0000256" key="4">
    <source>
        <dbReference type="SAM" id="MobiDB-lite"/>
    </source>
</evidence>
<evidence type="ECO:0000269" key="5">
    <source>
    </source>
</evidence>
<evidence type="ECO:0000305" key="6"/>
<gene>
    <name type="primary">LIS</name>
</gene>
<sequence length="574" mass="65822">MSCARITVTLPYRSAKTSIQRGITHCPALLRPRFSACTPLASAVPLSSTPLINGDNSPLKNTHQHVEERSSKRREYLLEETARKLQRNDTESVEKLKLIDNIQRLGIGYYFEDAIDAVLRSPFSAEEEEDLFTAALRFRLLRHNGIQVTPEIFLKFKDERGEFDESDTLGLLSLYEASNLGVTGEEILEEAMEFAEPRLRRSLSELAAPLRSEVAQALDVPRHLRMARLEARRFIEQYGKQSDHDGDLLELAILDYNQVQAQHQSELTEITRWWKQLGLVEKLGFGRDRALECFMWTMGILPHPKYSSSRIESAKAAALLYVIDDIFDTYGKMDELILFTDAIRRWDLEAMEGLPEYMKICYMALYNTTNEICYRVLKDTGRIALPYLKSVWIETIEAYMVEVKWFSGGSAPKLEEYIENGASTVGAYMVLVHLFFLIGEGLTHQNVLFFKQKPYHKPFSAAGRIFRLWDDLGTSQEEEERGDMASSIRLFMKEYKLSTVEEARSCVLEEISRLWKDLNEGLISIKDALPLTIVKVALNIARTSQVVYKHEQHTYMLSVDNYVEALFFTPLLSS</sequence>
<proteinExistence type="evidence at protein level"/>
<keyword id="KW-0150">Chloroplast</keyword>
<keyword id="KW-0456">Lyase</keyword>
<keyword id="KW-0460">Magnesium</keyword>
<keyword id="KW-0464">Manganese</keyword>
<keyword id="KW-0479">Metal-binding</keyword>
<keyword id="KW-0934">Plastid</keyword>
<keyword id="KW-0809">Transit peptide</keyword>
<organism>
    <name type="scientific">Ocimum basilicum</name>
    <name type="common">Sweet basil</name>
    <dbReference type="NCBI Taxonomy" id="39350"/>
    <lineage>
        <taxon>Eukaryota</taxon>
        <taxon>Viridiplantae</taxon>
        <taxon>Streptophyta</taxon>
        <taxon>Embryophyta</taxon>
        <taxon>Tracheophyta</taxon>
        <taxon>Spermatophyta</taxon>
        <taxon>Magnoliopsida</taxon>
        <taxon>eudicotyledons</taxon>
        <taxon>Gunneridae</taxon>
        <taxon>Pentapetalae</taxon>
        <taxon>asterids</taxon>
        <taxon>lamiids</taxon>
        <taxon>Lamiales</taxon>
        <taxon>Lamiaceae</taxon>
        <taxon>Nepetoideae</taxon>
        <taxon>Ocimeae</taxon>
        <taxon>Ociminae</taxon>
        <taxon>Ocimum</taxon>
    </lineage>
</organism>
<comment type="function">
    <text>Monoterpene synthase that catalyzes the formation of (3R)-linalool from geranyl diphosphate.</text>
</comment>
<comment type="catalytic activity">
    <reaction evidence="5">
        <text>(2E)-geranyl diphosphate + H2O = (R)-linalool + diphosphate</text>
        <dbReference type="Rhea" id="RHEA:15809"/>
        <dbReference type="ChEBI" id="CHEBI:28"/>
        <dbReference type="ChEBI" id="CHEBI:15377"/>
        <dbReference type="ChEBI" id="CHEBI:33019"/>
        <dbReference type="ChEBI" id="CHEBI:58057"/>
        <dbReference type="EC" id="4.2.3.26"/>
    </reaction>
</comment>
<comment type="cofactor">
    <cofactor evidence="1">
        <name>Mg(2+)</name>
        <dbReference type="ChEBI" id="CHEBI:18420"/>
    </cofactor>
    <cofactor evidence="1">
        <name>Mn(2+)</name>
        <dbReference type="ChEBI" id="CHEBI:29035"/>
    </cofactor>
    <text evidence="1">Binds 3 Mg(2+) or Mn(2+) ions per subunit.</text>
</comment>
<comment type="pathway">
    <text>Secondary metabolite biosynthesis; terpenoid biosynthesis.</text>
</comment>
<comment type="subcellular location">
    <subcellularLocation>
        <location evidence="3">Plastid</location>
        <location evidence="3">Chloroplast</location>
    </subcellularLocation>
</comment>
<comment type="domain">
    <text evidence="2">The Asp-Asp-Xaa-Xaa-Asp/Glu (DDXXD/E) motif is important for the catalytic activity, presumably through binding to Mg(2+).</text>
</comment>
<comment type="similarity">
    <text evidence="6">Belongs to the terpene synthase family. Tpsb subfamily.</text>
</comment>